<organism>
    <name type="scientific">Staphylococcus aureus</name>
    <dbReference type="NCBI Taxonomy" id="1280"/>
    <lineage>
        <taxon>Bacteria</taxon>
        <taxon>Bacillati</taxon>
        <taxon>Bacillota</taxon>
        <taxon>Bacilli</taxon>
        <taxon>Bacillales</taxon>
        <taxon>Staphylococcaceae</taxon>
        <taxon>Staphylococcus</taxon>
    </lineage>
</organism>
<feature type="chain" id="PRO_0000194632" description="Uncharacterized HTH-type transcriptional regulator">
    <location>
        <begin position="1"/>
        <end position="745"/>
    </location>
</feature>
<feature type="domain" description="HTH araC/xylS-type" evidence="1">
    <location>
        <begin position="158"/>
        <end position="256"/>
    </location>
</feature>
<feature type="DNA-binding region" description="H-T-H motif" evidence="1">
    <location>
        <begin position="175"/>
        <end position="196"/>
    </location>
</feature>
<feature type="DNA-binding region" description="H-T-H motif" evidence="1">
    <location>
        <begin position="223"/>
        <end position="246"/>
    </location>
</feature>
<protein>
    <recommendedName>
        <fullName>Uncharacterized HTH-type transcriptional regulator</fullName>
    </recommendedName>
</protein>
<accession>Q936F1</accession>
<accession>Q936E9</accession>
<reference key="1">
    <citation type="journal article" date="2002" name="J. Bacteriol.">
        <title>Type 1 capsule genes of Staphylococcus aureus are carried in a staphylococcal cassette chromosome genetic element.</title>
        <authorList>
            <person name="Luong T.T."/>
            <person name="Ouyang S."/>
            <person name="Bush K."/>
            <person name="Lee C.Y."/>
        </authorList>
    </citation>
    <scope>NUCLEOTIDE SEQUENCE [GENOMIC DNA]</scope>
    <source>
        <strain>ATCC 49951 / M / NCTC 10649</strain>
    </source>
</reference>
<sequence length="745" mass="87842">MQRDYLIRVETESMSDFKRLNGLMIGFVIKGEAHIYDENNMTQCNSGDIFIINHRDLYRFQLQQDGIICYIQFQMKYLADKFDDAHCLYFHLTDATTTKNKHQLRNIMARLVSTHIRHNELSKLTEQQLVIQLLMHMIHYVPRTYHSNQSILNDDKVNQVCDYIELHFHEDLSLSELSEYVGWSESHLSKKFAESLGVGFQHFLNTTRIEHAKLDLTYTDEMITDIALQNGFSSAASFARTFKHITHQTPKQYRGDRPAVTENQQSAQHDYHDRELILLLNDYIEEMNHFIEDIEMMNYKEITFQPTNQQLNQFNHIIQVGYLRNLLNTQYQSQLLTCHHDFQVNEVLAYDVMPYIMKKLNAPFTYDAEISNIFYDIDLCLDFLLDHNFSLTMHLDQYDSRDYIDAFKVFIHHVALHVSHRKDLKFNLYVTTLHTSLIEMIDYFKALFPNGGLYIHLDQATERQLPLLKRLEPHIDHFVFDANSNNAVDFNKMNDDEFKTASQMIINKTNYLIDLMHRHHLKRPLILLNWNTLTGDTFITNGECFRGGIIIEQLLKLSSKVEGIGYWLNYDLHVSHCRNERDYMNSIELFHQYNGKRPVYFTALLFNKLTSNILYSDDTCIVTGTDSNFQILLYDAKHFNPYLALDNQMNMRATEMIHLNINALEEGMYKIKHFTLDKENGALFNLWRKHHTIHGMDKDSIDYVNRMSFPKLEVYDIDMTDTLALNIKMITNGIHLIEVKRYPSS</sequence>
<name>YHTH1_STAAU</name>
<comment type="sequence caution" evidence="2">
    <conflict type="erroneous termination">
        <sequence resource="EMBL-CDS" id="AAL26687"/>
    </conflict>
    <text>Truncated C-terminus.</text>
</comment>
<comment type="sequence caution" evidence="2">
    <conflict type="erroneous termination">
        <sequence resource="EMBL-CDS" id="AAL26689"/>
    </conflict>
    <text>Truncated C-terminus.</text>
</comment>
<proteinExistence type="predicted"/>
<keyword id="KW-0238">DNA-binding</keyword>
<keyword id="KW-0677">Repeat</keyword>
<keyword id="KW-0804">Transcription</keyword>
<keyword id="KW-0805">Transcription regulation</keyword>
<evidence type="ECO:0000255" key="1">
    <source>
        <dbReference type="PROSITE-ProRule" id="PRU00593"/>
    </source>
</evidence>
<evidence type="ECO:0000305" key="2"/>
<dbReference type="EMBL" id="U10927">
    <property type="protein sequence ID" value="AAL26687.1"/>
    <property type="status" value="ALT_SEQ"/>
    <property type="molecule type" value="Genomic_DNA"/>
</dbReference>
<dbReference type="EMBL" id="U10927">
    <property type="protein sequence ID" value="AAL26689.1"/>
    <property type="status" value="ALT_SEQ"/>
    <property type="molecule type" value="Genomic_DNA"/>
</dbReference>
<dbReference type="SMR" id="Q936F1"/>
<dbReference type="GO" id="GO:0003700">
    <property type="term" value="F:DNA-binding transcription factor activity"/>
    <property type="evidence" value="ECO:0007669"/>
    <property type="project" value="InterPro"/>
</dbReference>
<dbReference type="GO" id="GO:0043565">
    <property type="term" value="F:sequence-specific DNA binding"/>
    <property type="evidence" value="ECO:0007669"/>
    <property type="project" value="InterPro"/>
</dbReference>
<dbReference type="Gene3D" id="3.20.20.80">
    <property type="entry name" value="Glycosidases"/>
    <property type="match status" value="1"/>
</dbReference>
<dbReference type="Gene3D" id="2.60.40.1500">
    <property type="entry name" value="Glycosyl hydrolase domain, family 39"/>
    <property type="match status" value="1"/>
</dbReference>
<dbReference type="Gene3D" id="1.10.10.60">
    <property type="entry name" value="Homeodomain-like"/>
    <property type="match status" value="2"/>
</dbReference>
<dbReference type="InterPro" id="IPR017853">
    <property type="entry name" value="Glycoside_hydrolase_SF"/>
</dbReference>
<dbReference type="InterPro" id="IPR009057">
    <property type="entry name" value="Homeodomain-like_sf"/>
</dbReference>
<dbReference type="InterPro" id="IPR037923">
    <property type="entry name" value="HTH-like"/>
</dbReference>
<dbReference type="InterPro" id="IPR018060">
    <property type="entry name" value="HTH_AraC"/>
</dbReference>
<dbReference type="InterPro" id="IPR020449">
    <property type="entry name" value="Tscrpt_reg_AraC-type_HTH"/>
</dbReference>
<dbReference type="NCBIfam" id="NF047455">
    <property type="entry name" value="TF_Staph_AryK"/>
    <property type="match status" value="1"/>
</dbReference>
<dbReference type="PANTHER" id="PTHR43280">
    <property type="entry name" value="ARAC-FAMILY TRANSCRIPTIONAL REGULATOR"/>
    <property type="match status" value="1"/>
</dbReference>
<dbReference type="PANTHER" id="PTHR43280:SF28">
    <property type="entry name" value="HTH-TYPE TRANSCRIPTIONAL ACTIVATOR RHAS"/>
    <property type="match status" value="1"/>
</dbReference>
<dbReference type="Pfam" id="PF12833">
    <property type="entry name" value="HTH_18"/>
    <property type="match status" value="1"/>
</dbReference>
<dbReference type="PRINTS" id="PR00032">
    <property type="entry name" value="HTHARAC"/>
</dbReference>
<dbReference type="SMART" id="SM00342">
    <property type="entry name" value="HTH_ARAC"/>
    <property type="match status" value="1"/>
</dbReference>
<dbReference type="SUPFAM" id="SSF51445">
    <property type="entry name" value="(Trans)glycosidases"/>
    <property type="match status" value="1"/>
</dbReference>
<dbReference type="SUPFAM" id="SSF51011">
    <property type="entry name" value="Glycosyl hydrolase domain"/>
    <property type="match status" value="1"/>
</dbReference>
<dbReference type="SUPFAM" id="SSF46689">
    <property type="entry name" value="Homeodomain-like"/>
    <property type="match status" value="2"/>
</dbReference>
<dbReference type="SUPFAM" id="SSF51215">
    <property type="entry name" value="Regulatory protein AraC"/>
    <property type="match status" value="1"/>
</dbReference>
<dbReference type="PROSITE" id="PS01124">
    <property type="entry name" value="HTH_ARAC_FAMILY_2"/>
    <property type="match status" value="1"/>
</dbReference>